<accession>P37217</accession>
<comment type="function">
    <text evidence="2 6 7 8">Transmembrane protein expressed mainly on T-cells resident in mucosa that plays an essential role in immune cell homeostasis. Rapidly expressed on the surface of platelets, T-lymphocytes and NK cells upon activation by various stimuli, such as antigen recognition or cytokine signaling, stimulates different signaling pathways in different cell types (PubMed:20696842, PubMed:38540778). Negatively regulates Th17 cell differentiation through its carbohydrate dependent interaction with galectin-1/LGALS1 present on immature dendritic cells (By similarity). Association of CD69 cytoplasmic tail with the JAK3/STAT5 signaling pathway regulates the transcription of RORgamma/RORC and, consequently, differentiation toward the Th17 lineage (PubMed:20696842). Also acts via the S100A8/S100A9 complex present on peripheral blood mononuclear cells to promote the conversion of naive CD4 T-cells into regulatory T-cells. Acts as an oxidized low-density lipoprotein (oxLDL) receptor in CD4 T-lymphocytes and negatively regulates the inflammatory response by inducing the expression of PDCD1 through the activation of NFAT. Participates in adipose tissue-derived mesenchymal stem cells (ASCs)-mediated protection against P.aeruginosa infection. Mechanistically, specifically recognizes P.aeruginosa to promote ERK1 activation, followed by granulocyte-macrophage colony-stimulating factor (GM-CSF) and other inflammatory cytokines secretion (By similarity). In eosinophils, induces IL-10 production through the ERK1/2 pathway (PubMed:38540778). Negatively regulates the chemotactic responses of effector lymphocytes and dendritic cells (DCs) to sphingosine 1 phosphate/S1P by acting as a S1PR1 receptor agonist and facilitating the internalization and degradation of the receptor (PubMed:16525420).</text>
</comment>
<comment type="subunit">
    <text evidence="2 6 7">Homodimer; disulfide-linked. Interacts with S100A8 and S100A9 (By similarity). Interacts with galactin-1/LGALS1 (By similarity). Interacts with S1PR1; this interaction mediates S1PR1 degradation (PubMed:16525420). Interacts with JAK3 and STAT5 (PubMed:20696842).</text>
</comment>
<comment type="subcellular location">
    <subcellularLocation>
        <location evidence="8">Cell membrane</location>
        <topology>Single-pass type II membrane protein</topology>
    </subcellularLocation>
</comment>
<comment type="tissue specificity">
    <text evidence="8">Expressed on the surface of activated T-cells, B-cells, natural killer cells, neutrophils and platelets. Present also in eosinophils (PubMed:38540778).</text>
</comment>
<comment type="developmental stage">
    <text>Earliest inducible cell surface glycoprotein acquired during lymphoid activation.</text>
</comment>
<comment type="induction">
    <text>By the activation of T-lymphocytes.</text>
</comment>
<comment type="PTM">
    <text evidence="1">Constitutive Ser/Thr phosphorylation in both mature thymocytes and activated T-lymphocytes.</text>
</comment>
<comment type="disruption phenotype">
    <text evidence="7">Deletion mice develop an exacerbated form of autoimmune disease due to an enhanced inflammatory response associated with Th17 lymphocytes.</text>
</comment>
<comment type="online information" name="Functional Glycomics Gateway - Glycan Binding">
    <link uri="http://www.functionalglycomics.org/glycomics/GBPServlet?&amp;operationType=view&amp;cbpId=cbp_mou_Ctlect_173"/>
    <text>CD69</text>
</comment>
<protein>
    <recommendedName>
        <fullName>Early activation antigen CD69</fullName>
    </recommendedName>
    <cdAntigenName>CD69</cdAntigenName>
</protein>
<feature type="chain" id="PRO_0000046584" description="Early activation antigen CD69">
    <location>
        <begin position="1"/>
        <end position="199"/>
    </location>
</feature>
<feature type="topological domain" description="Cytoplasmic" evidence="3">
    <location>
        <begin position="1"/>
        <end position="40"/>
    </location>
</feature>
<feature type="transmembrane region" description="Helical; Signal-anchor for type II membrane protein" evidence="3">
    <location>
        <begin position="41"/>
        <end position="61"/>
    </location>
</feature>
<feature type="topological domain" description="Extracellular" evidence="3">
    <location>
        <begin position="62"/>
        <end position="199"/>
    </location>
</feature>
<feature type="domain" description="C-type lectin" evidence="4">
    <location>
        <begin position="92"/>
        <end position="195"/>
    </location>
</feature>
<feature type="region of interest" description="Disordered" evidence="5">
    <location>
        <begin position="1"/>
        <end position="20"/>
    </location>
</feature>
<feature type="compositionally biased region" description="Polar residues" evidence="5">
    <location>
        <begin position="1"/>
        <end position="14"/>
    </location>
</feature>
<feature type="glycosylation site" description="N-linked (GlcNAc...) asparagine" evidence="3">
    <location>
        <position position="150"/>
    </location>
</feature>
<feature type="glycosylation site" description="N-linked (GlcNAc...) asparagine" evidence="3">
    <location>
        <position position="166"/>
    </location>
</feature>
<feature type="glycosylation site" description="N-linked (GlcNAc...) asparagine" evidence="3">
    <location>
        <position position="180"/>
    </location>
</feature>
<feature type="disulfide bond" description="Interchain" evidence="9">
    <location>
        <position position="68"/>
    </location>
</feature>
<feature type="disulfide bond" evidence="4">
    <location>
        <begin position="85"/>
        <end position="96"/>
    </location>
</feature>
<feature type="disulfide bond" evidence="4">
    <location>
        <begin position="113"/>
        <end position="194"/>
    </location>
</feature>
<feature type="disulfide bond" evidence="4">
    <location>
        <begin position="173"/>
        <end position="186"/>
    </location>
</feature>
<reference key="1">
    <citation type="journal article" date="1993" name="Eur. J. Immunol.">
        <title>Molecular characterization of the early activation antigen CD69: a type II membrane glycoprotein related to a family of natural killer cell activation antigens.</title>
        <authorList>
            <person name="Ziegler S.F."/>
            <person name="Ramsdell F."/>
            <person name="Hjerrild K.A."/>
            <person name="Armitage R.J."/>
            <person name="Grabstein K.H."/>
            <person name="Hennen K.B."/>
            <person name="Farrah T."/>
            <person name="Fanslow W.C."/>
            <person name="Shevach E.M."/>
            <person name="Alderson M.R."/>
        </authorList>
    </citation>
    <scope>NUCLEOTIDE SEQUENCE [GENOMIC DNA]</scope>
</reference>
<reference key="2">
    <citation type="journal article" date="2006" name="Nature">
        <title>CD69 acts downstream of interferon-alpha/beta to inhibit S1P1 and lymphocyte egress from lymphoid organs.</title>
        <authorList>
            <person name="Shiow L.R."/>
            <person name="Rosen D.B."/>
            <person name="Brdickova N."/>
            <person name="Xu Y."/>
            <person name="An J."/>
            <person name="Lanier L.L."/>
            <person name="Cyster J.G."/>
            <person name="Matloubian M."/>
        </authorList>
    </citation>
    <scope>FUNCTION</scope>
    <scope>INTERACTION WITH S1PR1</scope>
</reference>
<reference key="3">
    <citation type="journal article" date="2010" name="Mol. Cell. Biol.">
        <title>CD69 association with Jak3/Stat5 proteins regulates Th17 cell differentiation.</title>
        <authorList>
            <person name="Martin P."/>
            <person name="Gomez M."/>
            <person name="Lamana A."/>
            <person name="Cruz-Adalia A."/>
            <person name="Ramirez-Huesca M."/>
            <person name="Ursa M.A."/>
            <person name="Yanez-Mo M."/>
            <person name="Sanchez-Madrid F."/>
        </authorList>
    </citation>
    <scope>FUNCTION</scope>
    <scope>DISRUPTION PHENOTYPE</scope>
    <scope>INTERACTION WITH JAK3 AND STAT5</scope>
</reference>
<reference key="4">
    <citation type="journal article" date="2024" name="Biomolecules">
        <title>CD69 Signaling in Eosinophils Induces IL-10 Production and Apoptosis via the Erk1/2 and JNK Pathways, Respectively.</title>
        <authorList>
            <person name="Bui D.V."/>
            <person name="Nguyen L.M."/>
            <person name="Kanda A."/>
            <person name="Chu H.H."/>
            <person name="Thi Le N.K."/>
            <person name="Yun Y."/>
            <person name="Kobayashi Y."/>
            <person name="Suzuki K."/>
            <person name="Mitani A."/>
            <person name="Shimamura A."/>
            <person name="Fukui K."/>
            <person name="Sawada S."/>
            <person name="Dombrowicz D."/>
            <person name="Iwai H."/>
        </authorList>
    </citation>
    <scope>FUNCTION</scope>
    <scope>TISSUE SPECIFICITY</scope>
    <scope>SUBCELLULAR LOCATION</scope>
</reference>
<gene>
    <name type="primary">Cd69</name>
</gene>
<organism>
    <name type="scientific">Mus musculus</name>
    <name type="common">Mouse</name>
    <dbReference type="NCBI Taxonomy" id="10090"/>
    <lineage>
        <taxon>Eukaryota</taxon>
        <taxon>Metazoa</taxon>
        <taxon>Chordata</taxon>
        <taxon>Craniata</taxon>
        <taxon>Vertebrata</taxon>
        <taxon>Euteleostomi</taxon>
        <taxon>Mammalia</taxon>
        <taxon>Eutheria</taxon>
        <taxon>Euarchontoglires</taxon>
        <taxon>Glires</taxon>
        <taxon>Rodentia</taxon>
        <taxon>Myomorpha</taxon>
        <taxon>Muroidea</taxon>
        <taxon>Muridae</taxon>
        <taxon>Murinae</taxon>
        <taxon>Mus</taxon>
        <taxon>Mus</taxon>
    </lineage>
</organism>
<dbReference type="EMBL" id="L23638">
    <property type="status" value="NOT_ANNOTATED_CDS"/>
    <property type="molecule type" value="Genomic_DNA"/>
</dbReference>
<dbReference type="CCDS" id="CCDS20582.1"/>
<dbReference type="RefSeq" id="NP_001028294.1">
    <property type="nucleotide sequence ID" value="NM_001033122.4"/>
</dbReference>
<dbReference type="SMR" id="P37217"/>
<dbReference type="DIP" id="DIP-60425N"/>
<dbReference type="FunCoup" id="P37217">
    <property type="interactions" value="84"/>
</dbReference>
<dbReference type="IntAct" id="P37217">
    <property type="interactions" value="1"/>
</dbReference>
<dbReference type="STRING" id="10090.ENSMUSP00000032259"/>
<dbReference type="GlyCosmos" id="P37217">
    <property type="glycosylation" value="3 sites, No reported glycans"/>
</dbReference>
<dbReference type="GlyGen" id="P37217">
    <property type="glycosylation" value="3 sites"/>
</dbReference>
<dbReference type="iPTMnet" id="P37217"/>
<dbReference type="PhosphoSitePlus" id="P37217"/>
<dbReference type="jPOST" id="P37217"/>
<dbReference type="PaxDb" id="10090-ENSMUSP00000032259"/>
<dbReference type="ProteomicsDB" id="279987"/>
<dbReference type="Antibodypedia" id="3741">
    <property type="antibodies" value="1278 antibodies from 46 providers"/>
</dbReference>
<dbReference type="DNASU" id="12515"/>
<dbReference type="Ensembl" id="ENSMUST00000032259.6">
    <property type="protein sequence ID" value="ENSMUSP00000032259.4"/>
    <property type="gene ID" value="ENSMUSG00000030156.6"/>
</dbReference>
<dbReference type="GeneID" id="12515"/>
<dbReference type="KEGG" id="mmu:12515"/>
<dbReference type="UCSC" id="uc009efi.1">
    <property type="organism name" value="mouse"/>
</dbReference>
<dbReference type="AGR" id="MGI:88343"/>
<dbReference type="CTD" id="969"/>
<dbReference type="MGI" id="MGI:88343">
    <property type="gene designation" value="Cd69"/>
</dbReference>
<dbReference type="VEuPathDB" id="HostDB:ENSMUSG00000030156"/>
<dbReference type="eggNOG" id="KOG4297">
    <property type="taxonomic scope" value="Eukaryota"/>
</dbReference>
<dbReference type="GeneTree" id="ENSGT00940000161987"/>
<dbReference type="HOGENOM" id="CLU_049894_8_4_1"/>
<dbReference type="InParanoid" id="P37217"/>
<dbReference type="OMA" id="WFNFTGS"/>
<dbReference type="OrthoDB" id="10059571at2759"/>
<dbReference type="PhylomeDB" id="P37217"/>
<dbReference type="TreeFam" id="TF351467"/>
<dbReference type="BioGRID-ORCS" id="12515">
    <property type="hits" value="2 hits in 78 CRISPR screens"/>
</dbReference>
<dbReference type="PRO" id="PR:P37217"/>
<dbReference type="Proteomes" id="UP000000589">
    <property type="component" value="Chromosome 6"/>
</dbReference>
<dbReference type="RNAct" id="P37217">
    <property type="molecule type" value="protein"/>
</dbReference>
<dbReference type="Bgee" id="ENSMUSG00000030156">
    <property type="expression patterns" value="Expressed in peripheral lymph node and 51 other cell types or tissues"/>
</dbReference>
<dbReference type="ExpressionAtlas" id="P37217">
    <property type="expression patterns" value="baseline and differential"/>
</dbReference>
<dbReference type="GO" id="GO:0009986">
    <property type="term" value="C:cell surface"/>
    <property type="evidence" value="ECO:0000314"/>
    <property type="project" value="MGI"/>
</dbReference>
<dbReference type="GO" id="GO:0009897">
    <property type="term" value="C:external side of plasma membrane"/>
    <property type="evidence" value="ECO:0000314"/>
    <property type="project" value="MGI"/>
</dbReference>
<dbReference type="GO" id="GO:0032991">
    <property type="term" value="C:protein-containing complex"/>
    <property type="evidence" value="ECO:0007669"/>
    <property type="project" value="Ensembl"/>
</dbReference>
<dbReference type="GO" id="GO:0030246">
    <property type="term" value="F:carbohydrate binding"/>
    <property type="evidence" value="ECO:0007669"/>
    <property type="project" value="UniProtKB-KW"/>
</dbReference>
<dbReference type="GO" id="GO:0042802">
    <property type="term" value="F:identical protein binding"/>
    <property type="evidence" value="ECO:0007669"/>
    <property type="project" value="Ensembl"/>
</dbReference>
<dbReference type="GO" id="GO:0140313">
    <property type="term" value="F:molecular sequestering activity"/>
    <property type="evidence" value="ECO:0007669"/>
    <property type="project" value="Ensembl"/>
</dbReference>
<dbReference type="GO" id="GO:0004888">
    <property type="term" value="F:transmembrane signaling receptor activity"/>
    <property type="evidence" value="ECO:0007669"/>
    <property type="project" value="Ensembl"/>
</dbReference>
<dbReference type="GO" id="GO:0071466">
    <property type="term" value="P:cellular response to xenobiotic stimulus"/>
    <property type="evidence" value="ECO:0000270"/>
    <property type="project" value="UniProtKB"/>
</dbReference>
<dbReference type="GO" id="GO:2000405">
    <property type="term" value="P:negative regulation of T cell migration"/>
    <property type="evidence" value="ECO:0007669"/>
    <property type="project" value="Ensembl"/>
</dbReference>
<dbReference type="GO" id="GO:2000329">
    <property type="term" value="P:negative regulation of T-helper 17 cell lineage commitment"/>
    <property type="evidence" value="ECO:0007669"/>
    <property type="project" value="Ensembl"/>
</dbReference>
<dbReference type="CDD" id="cd03593">
    <property type="entry name" value="CLECT_NK_receptors_like"/>
    <property type="match status" value="1"/>
</dbReference>
<dbReference type="Gene3D" id="3.10.100.10">
    <property type="entry name" value="Mannose-Binding Protein A, subunit A"/>
    <property type="match status" value="1"/>
</dbReference>
<dbReference type="InterPro" id="IPR001304">
    <property type="entry name" value="C-type_lectin-like"/>
</dbReference>
<dbReference type="InterPro" id="IPR016186">
    <property type="entry name" value="C-type_lectin-like/link_sf"/>
</dbReference>
<dbReference type="InterPro" id="IPR050828">
    <property type="entry name" value="C-type_lectin/matrix_domain"/>
</dbReference>
<dbReference type="InterPro" id="IPR016187">
    <property type="entry name" value="CTDL_fold"/>
</dbReference>
<dbReference type="InterPro" id="IPR033992">
    <property type="entry name" value="NKR-like_CTLD"/>
</dbReference>
<dbReference type="PANTHER" id="PTHR45710">
    <property type="entry name" value="C-TYPE LECTIN DOMAIN-CONTAINING PROTEIN 180"/>
    <property type="match status" value="1"/>
</dbReference>
<dbReference type="PANTHER" id="PTHR45710:SF31">
    <property type="entry name" value="EARLY ACTIVATION ANTIGEN CD69"/>
    <property type="match status" value="1"/>
</dbReference>
<dbReference type="Pfam" id="PF00059">
    <property type="entry name" value="Lectin_C"/>
    <property type="match status" value="1"/>
</dbReference>
<dbReference type="SMART" id="SM00034">
    <property type="entry name" value="CLECT"/>
    <property type="match status" value="1"/>
</dbReference>
<dbReference type="SUPFAM" id="SSF56436">
    <property type="entry name" value="C-type lectin-like"/>
    <property type="match status" value="1"/>
</dbReference>
<dbReference type="PROSITE" id="PS50041">
    <property type="entry name" value="C_TYPE_LECTIN_2"/>
    <property type="match status" value="1"/>
</dbReference>
<sequence length="199" mass="22517">MDSENCSITENSSSHLERGQKDHGTSIHFEKHHEGSIQVSIPWAVLIVVLITSLIIALIALNVGKYNCPGLYEKLESSDHHVATCKNEWISYKRTCYFFSTTTKSWALAQRSCSEDAATLAVIDSEKDMTFLKRYSGELEHWIGLKNEANQTWKWANGKEFNSWFNLTGSGRCVSVNHKNVTAVDCEANFHWVCSKPSR</sequence>
<keyword id="KW-1003">Cell membrane</keyword>
<keyword id="KW-1015">Disulfide bond</keyword>
<keyword id="KW-0325">Glycoprotein</keyword>
<keyword id="KW-0430">Lectin</keyword>
<keyword id="KW-0472">Membrane</keyword>
<keyword id="KW-0597">Phosphoprotein</keyword>
<keyword id="KW-0675">Receptor</keyword>
<keyword id="KW-1185">Reference proteome</keyword>
<keyword id="KW-0735">Signal-anchor</keyword>
<keyword id="KW-0812">Transmembrane</keyword>
<keyword id="KW-1133">Transmembrane helix</keyword>
<proteinExistence type="evidence at protein level"/>
<evidence type="ECO:0000250" key="1"/>
<evidence type="ECO:0000250" key="2">
    <source>
        <dbReference type="UniProtKB" id="Q07108"/>
    </source>
</evidence>
<evidence type="ECO:0000255" key="3"/>
<evidence type="ECO:0000255" key="4">
    <source>
        <dbReference type="PROSITE-ProRule" id="PRU00040"/>
    </source>
</evidence>
<evidence type="ECO:0000256" key="5">
    <source>
        <dbReference type="SAM" id="MobiDB-lite"/>
    </source>
</evidence>
<evidence type="ECO:0000269" key="6">
    <source>
    </source>
</evidence>
<evidence type="ECO:0000269" key="7">
    <source>
    </source>
</evidence>
<evidence type="ECO:0000269" key="8">
    <source>
    </source>
</evidence>
<evidence type="ECO:0000305" key="9"/>
<name>CD69_MOUSE</name>